<dbReference type="EMBL" id="CP000950">
    <property type="protein sequence ID" value="ACA67626.1"/>
    <property type="molecule type" value="Genomic_DNA"/>
</dbReference>
<dbReference type="RefSeq" id="WP_012303862.1">
    <property type="nucleotide sequence ID" value="NZ_CP009792.1"/>
</dbReference>
<dbReference type="SMR" id="B1JSD5"/>
<dbReference type="KEGG" id="ypy:YPK_1332"/>
<dbReference type="PATRIC" id="fig|502800.11.peg.1967"/>
<dbReference type="GO" id="GO:1990281">
    <property type="term" value="C:efflux pump complex"/>
    <property type="evidence" value="ECO:0007669"/>
    <property type="project" value="TreeGrafter"/>
</dbReference>
<dbReference type="GO" id="GO:0005886">
    <property type="term" value="C:plasma membrane"/>
    <property type="evidence" value="ECO:0007669"/>
    <property type="project" value="UniProtKB-SubCell"/>
</dbReference>
<dbReference type="GO" id="GO:0015562">
    <property type="term" value="F:efflux transmembrane transporter activity"/>
    <property type="evidence" value="ECO:0007669"/>
    <property type="project" value="TreeGrafter"/>
</dbReference>
<dbReference type="FunFam" id="2.40.420.20:FF:000001">
    <property type="entry name" value="Efflux RND transporter periplasmic adaptor subunit"/>
    <property type="match status" value="1"/>
</dbReference>
<dbReference type="FunFam" id="1.10.287.470:FF:000005">
    <property type="entry name" value="Multidrug resistance protein MdtA"/>
    <property type="match status" value="1"/>
</dbReference>
<dbReference type="FunFam" id="2.40.30.170:FF:000006">
    <property type="entry name" value="Multidrug resistance protein MdtA"/>
    <property type="match status" value="1"/>
</dbReference>
<dbReference type="Gene3D" id="2.40.30.170">
    <property type="match status" value="1"/>
</dbReference>
<dbReference type="Gene3D" id="2.40.420.20">
    <property type="match status" value="1"/>
</dbReference>
<dbReference type="Gene3D" id="2.40.50.100">
    <property type="match status" value="1"/>
</dbReference>
<dbReference type="Gene3D" id="1.10.287.470">
    <property type="entry name" value="Helix hairpin bin"/>
    <property type="match status" value="1"/>
</dbReference>
<dbReference type="HAMAP" id="MF_01422">
    <property type="entry name" value="MdtA"/>
    <property type="match status" value="1"/>
</dbReference>
<dbReference type="InterPro" id="IPR032317">
    <property type="entry name" value="CusB_D23"/>
</dbReference>
<dbReference type="InterPro" id="IPR022824">
    <property type="entry name" value="Multidrug-R_MdtA"/>
</dbReference>
<dbReference type="InterPro" id="IPR006143">
    <property type="entry name" value="RND_pump_MFP"/>
</dbReference>
<dbReference type="NCBIfam" id="NF008589">
    <property type="entry name" value="PRK11556.1"/>
    <property type="match status" value="1"/>
</dbReference>
<dbReference type="NCBIfam" id="TIGR01730">
    <property type="entry name" value="RND_mfp"/>
    <property type="match status" value="1"/>
</dbReference>
<dbReference type="PANTHER" id="PTHR30469">
    <property type="entry name" value="MULTIDRUG RESISTANCE PROTEIN MDTA"/>
    <property type="match status" value="1"/>
</dbReference>
<dbReference type="PANTHER" id="PTHR30469:SF12">
    <property type="entry name" value="MULTIDRUG RESISTANCE PROTEIN MDTA"/>
    <property type="match status" value="1"/>
</dbReference>
<dbReference type="Pfam" id="PF16576">
    <property type="entry name" value="HlyD_D23"/>
    <property type="match status" value="1"/>
</dbReference>
<dbReference type="SUPFAM" id="SSF111369">
    <property type="entry name" value="HlyD-like secretion proteins"/>
    <property type="match status" value="1"/>
</dbReference>
<sequence length="444" mass="47562">MKSQSKRTSRLFVFVGVVVAIIIAVLSWRYFGTGSDNNTSGAQQSARGQDTSHGGRRNTPLAPVQAATATEQEVPRYLTGLGTVIAANTVTVTSRVDGELMALHFTEGQQVKAGDLLAEIDPRPYEVQLTQAQGQLAKDQATLDNARRDLARYQKLSKTGLISQQELDTQSSLVRQSEGSVKADQGAIDSAKLQLTYSRITAPISGRVGLKQVDVGNYITSGTATPIVVITQTHPVDVVFTLPESDIPAIMQAQKNAEKTHAIVPVEAWDRTNKQMLAQGYLLSIDNQIDTTTGTIKLKARFNNEDDVLFPNQFVNARIKVDLLQNAVVVPTAAVQMGSEGNFVWTLDDANKVSKHLVTTGIQNSQQVVIDAGLNAGQRVVTDGIDRLTEGVQVEVVTPRSANTDTNPASAEKAAAEAEGSTPHQGRGRPANAPARSTTAAEKS</sequence>
<gene>
    <name evidence="1" type="primary">mdtA</name>
    <name type="ordered locus">YPK_1332</name>
</gene>
<evidence type="ECO:0000255" key="1">
    <source>
        <dbReference type="HAMAP-Rule" id="MF_01422"/>
    </source>
</evidence>
<evidence type="ECO:0000256" key="2">
    <source>
        <dbReference type="SAM" id="MobiDB-lite"/>
    </source>
</evidence>
<reference key="1">
    <citation type="submission" date="2008-02" db="EMBL/GenBank/DDBJ databases">
        <title>Complete sequence of Yersinia pseudotuberculosis YPIII.</title>
        <authorList>
            <consortium name="US DOE Joint Genome Institute"/>
            <person name="Copeland A."/>
            <person name="Lucas S."/>
            <person name="Lapidus A."/>
            <person name="Glavina del Rio T."/>
            <person name="Dalin E."/>
            <person name="Tice H."/>
            <person name="Bruce D."/>
            <person name="Goodwin L."/>
            <person name="Pitluck S."/>
            <person name="Munk A.C."/>
            <person name="Brettin T."/>
            <person name="Detter J.C."/>
            <person name="Han C."/>
            <person name="Tapia R."/>
            <person name="Schmutz J."/>
            <person name="Larimer F."/>
            <person name="Land M."/>
            <person name="Hauser L."/>
            <person name="Challacombe J.F."/>
            <person name="Green L."/>
            <person name="Lindler L.E."/>
            <person name="Nikolich M.P."/>
            <person name="Richardson P."/>
        </authorList>
    </citation>
    <scope>NUCLEOTIDE SEQUENCE [LARGE SCALE GENOMIC DNA]</scope>
    <source>
        <strain>YPIII</strain>
    </source>
</reference>
<comment type="subunit">
    <text evidence="1">Part of a tripartite efflux system composed of MdtA, MdtB and MdtC.</text>
</comment>
<comment type="subcellular location">
    <subcellularLocation>
        <location evidence="1">Cell inner membrane</location>
        <topology evidence="1">Peripheral membrane protein</topology>
    </subcellularLocation>
</comment>
<comment type="similarity">
    <text evidence="1">Belongs to the membrane fusion protein (MFP) (TC 8.A.1) family.</text>
</comment>
<name>MDTA_YERPY</name>
<protein>
    <recommendedName>
        <fullName evidence="1">Multidrug resistance protein MdtA</fullName>
    </recommendedName>
    <alternativeName>
        <fullName evidence="1">Multidrug transporter MdtA</fullName>
    </alternativeName>
</protein>
<proteinExistence type="inferred from homology"/>
<keyword id="KW-0997">Cell inner membrane</keyword>
<keyword id="KW-1003">Cell membrane</keyword>
<keyword id="KW-0472">Membrane</keyword>
<keyword id="KW-0677">Repeat</keyword>
<keyword id="KW-0732">Signal</keyword>
<keyword id="KW-0813">Transport</keyword>
<accession>B1JSD5</accession>
<organism>
    <name type="scientific">Yersinia pseudotuberculosis serotype O:3 (strain YPIII)</name>
    <dbReference type="NCBI Taxonomy" id="502800"/>
    <lineage>
        <taxon>Bacteria</taxon>
        <taxon>Pseudomonadati</taxon>
        <taxon>Pseudomonadota</taxon>
        <taxon>Gammaproteobacteria</taxon>
        <taxon>Enterobacterales</taxon>
        <taxon>Yersiniaceae</taxon>
        <taxon>Yersinia</taxon>
    </lineage>
</organism>
<feature type="signal peptide" evidence="1">
    <location>
        <begin position="1"/>
        <end position="20"/>
    </location>
</feature>
<feature type="chain" id="PRO_1000145646" description="Multidrug resistance protein MdtA">
    <location>
        <begin position="21"/>
        <end position="444"/>
    </location>
</feature>
<feature type="region of interest" description="Disordered" evidence="2">
    <location>
        <begin position="37"/>
        <end position="60"/>
    </location>
</feature>
<feature type="region of interest" description="Disordered" evidence="2">
    <location>
        <begin position="398"/>
        <end position="444"/>
    </location>
</feature>
<feature type="compositionally biased region" description="Polar residues" evidence="2">
    <location>
        <begin position="37"/>
        <end position="52"/>
    </location>
</feature>
<feature type="compositionally biased region" description="Low complexity" evidence="2">
    <location>
        <begin position="409"/>
        <end position="419"/>
    </location>
</feature>
<feature type="compositionally biased region" description="Polar residues" evidence="2">
    <location>
        <begin position="435"/>
        <end position="444"/>
    </location>
</feature>